<feature type="chain" id="PRO_0000369845" description="Outer capsid protein VP4" evidence="1">
    <location>
        <begin position="1"/>
        <end position="823"/>
    </location>
</feature>
<feature type="chain" id="PRO_0000369846" description="Outer capsid protein VP8*">
    <location>
        <begin position="1"/>
        <end position="245"/>
    </location>
</feature>
<feature type="chain" id="PRO_0000369847" description="Outer capsid protein VP5*">
    <location>
        <begin position="260"/>
        <end position="823"/>
    </location>
</feature>
<feature type="site" description="Probable cleavage" evidence="2">
    <location>
        <begin position="245"/>
        <end position="246"/>
    </location>
</feature>
<feature type="site" description="Probable cleavage" evidence="2">
    <location>
        <begin position="260"/>
        <end position="261"/>
    </location>
</feature>
<name>VP4_ROTJ1</name>
<organism>
    <name type="scientific">Rotavirus X (strain RVX/Human/China/NADRV-J19/1997/GXP[X])</name>
    <name type="common">RV ADRV-N</name>
    <name type="synonym">Rotavirus (isolate novel adult diarrhea rotavirus-J19)</name>
    <dbReference type="NCBI Taxonomy" id="335103"/>
    <lineage>
        <taxon>Viruses</taxon>
        <taxon>Riboviria</taxon>
        <taxon>Orthornavirae</taxon>
        <taxon>Duplornaviricota</taxon>
        <taxon>Resentoviricetes</taxon>
        <taxon>Reovirales</taxon>
        <taxon>Sedoreoviridae</taxon>
        <taxon>Rotavirus</taxon>
        <taxon>Rotavirus H</taxon>
    </lineage>
</organism>
<keyword id="KW-0167">Capsid protein</keyword>
<keyword id="KW-0348">Hemagglutinin</keyword>
<keyword id="KW-1032">Host cell membrane</keyword>
<keyword id="KW-1038">Host endoplasmic reticulum</keyword>
<keyword id="KW-1043">Host membrane</keyword>
<keyword id="KW-0945">Host-virus interaction</keyword>
<keyword id="KW-0472">Membrane</keyword>
<keyword id="KW-1152">Outer capsid protein</keyword>
<keyword id="KW-1185">Reference proteome</keyword>
<keyword id="KW-1161">Viral attachment to host cell</keyword>
<keyword id="KW-1162">Viral penetration into host cytoplasm</keyword>
<keyword id="KW-1173">Viral penetration via permeabilization of host membrane</keyword>
<keyword id="KW-0946">Virion</keyword>
<keyword id="KW-1160">Virus entry into host cell</keyword>
<accession>Q45UF8</accession>
<organismHost>
    <name type="scientific">Homo sapiens</name>
    <name type="common">Human</name>
    <dbReference type="NCBI Taxonomy" id="9606"/>
</organismHost>
<evidence type="ECO:0000255" key="1">
    <source>
        <dbReference type="HAMAP-Rule" id="MF_04125"/>
    </source>
</evidence>
<evidence type="ECO:0000305" key="2"/>
<protein>
    <recommendedName>
        <fullName evidence="1">Outer capsid protein VP4</fullName>
    </recommendedName>
    <alternativeName>
        <fullName evidence="1">Hemagglutinin</fullName>
    </alternativeName>
    <component>
        <recommendedName>
            <fullName evidence="2">Outer capsid protein VP8*</fullName>
        </recommendedName>
    </component>
    <component>
        <recommendedName>
            <fullName evidence="2">Outer capsid protein VP5*</fullName>
        </recommendedName>
    </component>
</protein>
<reference key="1">
    <citation type="journal article" date="2008" name="J. Gen. Virol.">
        <title>Molecular characterization of a novel adult diarrhoea rotavirus strain J19 isolated in China and its significance for the evolution and origin of group B rotaviruses.</title>
        <authorList>
            <person name="Jiang S."/>
            <person name="Ji S."/>
            <person name="Tang Q."/>
            <person name="Cui X."/>
            <person name="Yang H."/>
            <person name="Kan B."/>
            <person name="Gao S."/>
        </authorList>
    </citation>
    <scope>NUCLEOTIDE SEQUENCE [GENOMIC RNA]</scope>
</reference>
<comment type="function">
    <molecule>Outer capsid protein VP4</molecule>
    <text evidence="1">Spike-forming protein that mediates virion attachment to the host epithelial cell receptors and plays a major role in cell penetration, determination of host range restriction and virulence. Rotavirus attachment and entry into the host cell probably involves multiple sequential contacts between the outer capsid proteins VP4 and VP7, and the cell receptors. It is subsequently lost, together with VP7, following virus entry into the host cell. Following entry into the host cell, low intracellular or intravesicular Ca(2+) concentration probably causes the calcium-stabilized VP7 trimers to dissociate from the virion. This step is probably necessary for the membrane-disrupting entry step and the release of VP4, which is locked onto the virion by VP7.</text>
</comment>
<comment type="function">
    <molecule>Outer capsid protein VP5*</molecule>
    <text evidence="2">Forms the spike 'foot' and 'body' and acts as a membrane permeabilization protein that mediates release of viral particles from endosomal compartments into the cytoplasm. During entry, the part of VP5* that protrudes from the virus folds back on itself and reorganizes from a local dimer to a trimer. This reorganization may be linked to membrane penetration.</text>
</comment>
<comment type="function">
    <molecule>Outer capsid protein VP8*</molecule>
    <text evidence="2">Forms the head of the spikes and mediates the recognition of specific host cell surface glycans. It is the viral hemagglutinin and an important target of neutralizing antibodies.</text>
</comment>
<comment type="subunit">
    <molecule>Outer capsid protein VP4</molecule>
    <text evidence="2">Homotrimer. VP4 adopts a dimeric appearance above the capsid surface, while forming a trimeric base anchored inside the capsid layer. Only hints of the third molecule are observed above the capsid surface. It probably performs a series of molecular rearrangements during viral entry. Prior to trypsin cleavage, it is flexible. The priming trypsin cleavage triggers its rearrangement into rigid spikes with approximate two-fold symmetry of their protruding parts. After an unknown second triggering event, cleaved VP4 may undergo another rearrangement, in which two VP5* subunits fold back on themselves and join a third subunit to form a tightly associated trimer, shaped like a folded umbrella. Interacts with VP6. Interacts with VP7.</text>
</comment>
<comment type="subunit">
    <molecule>Outer capsid protein VP5*</molecule>
    <text evidence="2">Homotrimer. The trimer is coiled-coil stabilized by its C-terminus, however, its N-terminus, known as antigen domain or 'body', seems to be flexible allowing it to self-associate either as a dimer or a trimer.</text>
</comment>
<comment type="subcellular location">
    <molecule>Outer capsid protein VP4</molecule>
    <subcellularLocation>
        <location evidence="1">Virion</location>
    </subcellularLocation>
    <subcellularLocation>
        <location evidence="1">Host rough endoplasmic reticulum</location>
    </subcellularLocation>
    <subcellularLocation>
        <location evidence="1">Host cell membrane</location>
    </subcellularLocation>
    <subcellularLocation>
        <location evidence="1">Host endoplasmic reticulum-Golgi intermediate compartment</location>
    </subcellularLocation>
    <text evidence="1">The outer layer contains 180 copies of VP4, grouped as 60 dimers. Immature double-layered particles assembled in the cytoplasm bud across the membrane of the endoplasmic reticulum, acquiring during this process a transient lipid membrane that is modified with the ER resident viral glycoproteins NSP4 and VP7; these enveloped particles also contain VP4. As the particles move towards the interior of the ER cisternae, the transient lipid membrane and the non-structural protein NSP4 are lost, while the virus surface proteins VP4 and VP7 rearrange to form the outermost virus protein layer, yielding mature infectious triple-layered particles.</text>
</comment>
<comment type="domain">
    <molecule>Outer capsid protein VP4</molecule>
    <text evidence="1">The VP4 spike is divided into a foot, a stalk and body, and a head.</text>
</comment>
<comment type="PTM">
    <molecule>Outer capsid protein VP4</molecule>
    <text evidence="1">Proteolytic cleavage by trypsin results in activation of VP4 functions and greatly increases infectivity. The penetration into the host cell is dependent on trypsin treatment of VP4. It produces two peptides, VP5* and VP8* that remain associated with the virion. Cleavage of VP4 by trypsin probably occurs in vivo in the lumen of the intestine prior to infection of enterocytes. Trypsin seems to be incorporated into the three-layered viral particles but remains inactive as long as the viral outer capsid is intact and would only be activated upon the solubilization of the latter.</text>
</comment>
<comment type="similarity">
    <text evidence="1">Belongs to the rotavirus VP4 family.</text>
</comment>
<sequence>MSLRSLLITTEAVGETTQTSDHQTSFSTRTYNEINDRPSLRIEKDGEKAYCFKNLDPVRYDTRMGEYPFDYGGQSTENNQLQFDLFTKDLKADTDIDLSDDVKDDLKRQIMEYYQQGYRAIFLVRPQNQEQHYIASYSSTNLNFTSQPSIGVNLSILNKIQENKLYIYSTQPHIPSVGCEMIAKIFRTDIDNENSLINYSAPVTVTISVTKATFGDTFVCNHPNMNYQDLIPTMTKNSIYHDVKRITKIHEYINSKKKKKNSTSKIGGIQIAESKDGFWKILTKNYQIKLKFGVEGYGVMGGTFGNWLIDSGFKTVETNYEYQRNGKTINATTVASVKPSRKCGTRSPVFGQLQFSGEMMVLSHNDILTVFYTEREWALSNAIYAKNFATDFKRQFEITAQSDELLVRTNVVPHTIKNTPGKALMEYSHGGFGQIDTSDYTGMALTFRFRCISEDLPEGYYDRDKALAFANVGLTSFQDRQEANGTYWVYNTSTVGFGSCYPKKEFEYDINVTYTTLLPSDPEFTTGGTNYAQSVTAVLEESFINLQNQVNEMLTRMNISDLTSGVMSVFSVATSFPQILDGISDLLKAASSAFKKVKGKVGSVAKRLRGKRYVRLFDENVSIEETPRFLDSIRSSRRPSILSNMFNDDETFTALHTLASRTNSVASDVTYLQPIITTRIANSTPPVIAPASSVTYAKLKDISKIINAEIDPKSIMEFNQISNTISILDSTKKLAQYAVDPDIIDGILNKMVGGHARSLFSLKVRKHLLDAVEKDAFVKYNYHDLMGKLLNDRELLDITNNLSSQKQFELAKEFRDLLINALA</sequence>
<proteinExistence type="inferred from homology"/>
<dbReference type="EMBL" id="DQ113899">
    <property type="protein sequence ID" value="AAZ03487.1"/>
    <property type="molecule type" value="Genomic_RNA"/>
</dbReference>
<dbReference type="RefSeq" id="YP_392492.1">
    <property type="nucleotide sequence ID" value="NC_007550.1"/>
</dbReference>
<dbReference type="SMR" id="Q45UF8"/>
<dbReference type="IntAct" id="Q45UF8">
    <property type="interactions" value="1"/>
</dbReference>
<dbReference type="GeneID" id="5076652"/>
<dbReference type="KEGG" id="vg:5076652"/>
<dbReference type="OrthoDB" id="14963at10239"/>
<dbReference type="Proteomes" id="UP000007663">
    <property type="component" value="Genome"/>
</dbReference>
<dbReference type="GO" id="GO:0044172">
    <property type="term" value="C:host cell endoplasmic reticulum-Golgi intermediate compartment"/>
    <property type="evidence" value="ECO:0007669"/>
    <property type="project" value="UniProtKB-SubCell"/>
</dbReference>
<dbReference type="GO" id="GO:0020002">
    <property type="term" value="C:host cell plasma membrane"/>
    <property type="evidence" value="ECO:0007669"/>
    <property type="project" value="UniProtKB-SubCell"/>
</dbReference>
<dbReference type="GO" id="GO:0044168">
    <property type="term" value="C:host cell rough endoplasmic reticulum"/>
    <property type="evidence" value="ECO:0007669"/>
    <property type="project" value="UniProtKB-SubCell"/>
</dbReference>
<dbReference type="GO" id="GO:0016020">
    <property type="term" value="C:membrane"/>
    <property type="evidence" value="ECO:0007669"/>
    <property type="project" value="UniProtKB-KW"/>
</dbReference>
<dbReference type="GO" id="GO:0039624">
    <property type="term" value="C:viral outer capsid"/>
    <property type="evidence" value="ECO:0007669"/>
    <property type="project" value="UniProtKB-UniRule"/>
</dbReference>
<dbReference type="GO" id="GO:0039665">
    <property type="term" value="P:permeabilization of host organelle membrane involved in viral entry into host cell"/>
    <property type="evidence" value="ECO:0007669"/>
    <property type="project" value="UniProtKB-UniRule"/>
</dbReference>
<dbReference type="GO" id="GO:0019062">
    <property type="term" value="P:virion attachment to host cell"/>
    <property type="evidence" value="ECO:0007669"/>
    <property type="project" value="UniProtKB-UniRule"/>
</dbReference>
<dbReference type="HAMAP" id="MF_04125">
    <property type="entry name" value="Rota_VP4"/>
    <property type="match status" value="1"/>
</dbReference>
<dbReference type="InterPro" id="IPR042546">
    <property type="entry name" value="Rota_A_VP4"/>
</dbReference>
<dbReference type="InterPro" id="IPR035330">
    <property type="entry name" value="Rota_VP4_MID"/>
</dbReference>
<dbReference type="InterPro" id="IPR038017">
    <property type="entry name" value="Rota_VP4_MID_sf"/>
</dbReference>
<dbReference type="Pfam" id="PF17477">
    <property type="entry name" value="Rota_VP4_MID"/>
    <property type="match status" value="1"/>
</dbReference>
<dbReference type="SUPFAM" id="SSF111379">
    <property type="entry name" value="VP4 membrane interaction domain"/>
    <property type="match status" value="1"/>
</dbReference>